<organism>
    <name type="scientific">Homo sapiens</name>
    <name type="common">Human</name>
    <dbReference type="NCBI Taxonomy" id="9606"/>
    <lineage>
        <taxon>Eukaryota</taxon>
        <taxon>Metazoa</taxon>
        <taxon>Chordata</taxon>
        <taxon>Craniata</taxon>
        <taxon>Vertebrata</taxon>
        <taxon>Euteleostomi</taxon>
        <taxon>Mammalia</taxon>
        <taxon>Eutheria</taxon>
        <taxon>Euarchontoglires</taxon>
        <taxon>Primates</taxon>
        <taxon>Haplorrhini</taxon>
        <taxon>Catarrhini</taxon>
        <taxon>Hominidae</taxon>
        <taxon>Homo</taxon>
    </lineage>
</organism>
<accession>Q6NT16</accession>
<accession>A8K1K3</accession>
<accession>B3KW77</accession>
<accession>Q6ISF2</accession>
<sequence>MEALGDLEGPRAPGGDDPAGSAGETPGWLSREQVFVLISAASVNLGSMMCYSILGPFFPKEAEKKGASNTIIGMIFGCFALFELLASLVFGNYLVHIGAKFMFVAGMFVSGGVTILFGVLDRVPDGPVFIAMCFLVRVMDAVSFAAAMTASSSILAKAFPNNVATVLGSLETFSGLGLILGPPVGGFLYQSFGYEVPFIVLGCVVLLMVPLNMYILPNYESDPGEHSFWKLIALPKVGLIAFVINSLSSCFGFLDPTLSLFVLEKFNLPAGYVGLVFLGMALSYAISSPLFGLLSDKRPPLRKWLLVFGNLITAGCYMLLGPVPILHIKSQLWLLVLILVVSGLSAGMSIIPTFPEILSCAHENGFEEGLSTLGLVSGLFSAMWSIGAFMGPTLGGFLYEKIGFEWAAAIQGLWALISGLAMGLFYLLEYSRRKRSKSQNILSTEEERTTLLPNET</sequence>
<feature type="chain" id="PRO_0000294450" description="MFS-type transporter SLC18B1">
    <location>
        <begin position="1"/>
        <end position="456"/>
    </location>
</feature>
<feature type="topological domain" description="Cytoplasmic" evidence="3">
    <location>
        <begin position="1"/>
        <end position="33"/>
    </location>
</feature>
<feature type="transmembrane region" description="Helical" evidence="3">
    <location>
        <begin position="34"/>
        <end position="54"/>
    </location>
</feature>
<feature type="topological domain" description="Extracellular" evidence="3">
    <location>
        <begin position="55"/>
        <end position="70"/>
    </location>
</feature>
<feature type="transmembrane region" description="Helical" evidence="3">
    <location>
        <begin position="71"/>
        <end position="91"/>
    </location>
</feature>
<feature type="topological domain" description="Cytoplasmic" evidence="3">
    <location>
        <begin position="92"/>
        <end position="100"/>
    </location>
</feature>
<feature type="transmembrane region" description="Helical" evidence="3">
    <location>
        <begin position="101"/>
        <end position="121"/>
    </location>
</feature>
<feature type="topological domain" description="Extracellular" evidence="3">
    <location>
        <begin position="122"/>
        <end position="127"/>
    </location>
</feature>
<feature type="transmembrane region" description="Helical" evidence="3">
    <location>
        <begin position="128"/>
        <end position="148"/>
    </location>
</feature>
<feature type="topological domain" description="Cytoplasmic" evidence="3">
    <location>
        <begin position="149"/>
        <end position="161"/>
    </location>
</feature>
<feature type="transmembrane region" description="Helical" evidence="3">
    <location>
        <begin position="162"/>
        <end position="184"/>
    </location>
</feature>
<feature type="topological domain" description="Extracellular" evidence="3">
    <location>
        <begin position="185"/>
        <end position="195"/>
    </location>
</feature>
<feature type="transmembrane region" description="Helical" evidence="3">
    <location>
        <begin position="196"/>
        <end position="216"/>
    </location>
</feature>
<feature type="topological domain" description="Cytoplasmic" evidence="3">
    <location>
        <begin position="217"/>
        <end position="230"/>
    </location>
</feature>
<feature type="transmembrane region" description="Helical" evidence="3">
    <location>
        <begin position="231"/>
        <end position="251"/>
    </location>
</feature>
<feature type="topological domain" description="Extracellular" evidence="3">
    <location>
        <begin position="252"/>
        <end position="272"/>
    </location>
</feature>
<feature type="transmembrane region" description="Helical" evidence="3">
    <location>
        <begin position="273"/>
        <end position="293"/>
    </location>
</feature>
<feature type="topological domain" description="Cytoplasmic" evidence="3">
    <location>
        <begin position="294"/>
        <end position="304"/>
    </location>
</feature>
<feature type="transmembrane region" description="Helical" evidence="3">
    <location>
        <begin position="305"/>
        <end position="325"/>
    </location>
</feature>
<feature type="topological domain" description="Extracellular" evidence="3">
    <location>
        <begin position="326"/>
        <end position="331"/>
    </location>
</feature>
<feature type="transmembrane region" description="Helical" evidence="3">
    <location>
        <begin position="332"/>
        <end position="352"/>
    </location>
</feature>
<feature type="topological domain" description="Cytoplasmic" evidence="3">
    <location>
        <begin position="353"/>
        <end position="377"/>
    </location>
</feature>
<feature type="transmembrane region" description="Helical" evidence="3">
    <location>
        <begin position="378"/>
        <end position="398"/>
    </location>
</feature>
<feature type="topological domain" description="Extracellular" evidence="3">
    <location>
        <begin position="399"/>
        <end position="407"/>
    </location>
</feature>
<feature type="transmembrane region" description="Helical" evidence="3">
    <location>
        <begin position="408"/>
        <end position="428"/>
    </location>
</feature>
<feature type="topological domain" description="Cytoplasmic" evidence="3">
    <location>
        <begin position="429"/>
        <end position="456"/>
    </location>
</feature>
<feature type="region of interest" description="Disordered" evidence="4">
    <location>
        <begin position="1"/>
        <end position="24"/>
    </location>
</feature>
<feature type="compositionally biased region" description="Low complexity" evidence="4">
    <location>
        <begin position="10"/>
        <end position="23"/>
    </location>
</feature>
<feature type="modified residue" description="N-acetylmethionine" evidence="9">
    <location>
        <position position="1"/>
    </location>
</feature>
<feature type="modified residue" description="Phosphoserine" evidence="10">
    <location>
        <position position="21"/>
    </location>
</feature>
<feature type="modified residue" description="Phosphoserine" evidence="10">
    <location>
        <position position="438"/>
    </location>
</feature>
<feature type="sequence variant" id="VAR_061382" description="In dbSNP:rs59989552.">
    <original>R</original>
    <variation>L</variation>
    <location>
        <position position="11"/>
    </location>
</feature>
<feature type="sequence variant" id="VAR_063260" description="In dbSNP:rs41286192.">
    <original>S</original>
    <variation>P</variation>
    <location>
        <position position="30"/>
    </location>
</feature>
<feature type="sequence variant" id="VAR_033185" description="In dbSNP:rs6926101.">
    <original>V</original>
    <variation>I</variation>
    <location>
        <position position="204"/>
    </location>
</feature>
<feature type="sequence conflict" description="In Ref. 1; BAG54039." evidence="7" ref="1">
    <original>G</original>
    <variation>R</variation>
    <location>
        <position position="106"/>
    </location>
</feature>
<keyword id="KW-0007">Acetylation</keyword>
<keyword id="KW-0968">Cytoplasmic vesicle</keyword>
<keyword id="KW-0472">Membrane</keyword>
<keyword id="KW-0597">Phosphoprotein</keyword>
<keyword id="KW-1267">Proteomics identification</keyword>
<keyword id="KW-1185">Reference proteome</keyword>
<keyword id="KW-0770">Synapse</keyword>
<keyword id="KW-0812">Transmembrane</keyword>
<keyword id="KW-1133">Transmembrane helix</keyword>
<keyword id="KW-0813">Transport</keyword>
<proteinExistence type="evidence at protein level"/>
<evidence type="ECO:0000250" key="1">
    <source>
        <dbReference type="UniProtKB" id="D3Z5L6"/>
    </source>
</evidence>
<evidence type="ECO:0000250" key="2">
    <source>
        <dbReference type="UniProtKB" id="D4A9K4"/>
    </source>
</evidence>
<evidence type="ECO:0000255" key="3"/>
<evidence type="ECO:0000256" key="4">
    <source>
        <dbReference type="SAM" id="MobiDB-lite"/>
    </source>
</evidence>
<evidence type="ECO:0000269" key="5">
    <source>
    </source>
</evidence>
<evidence type="ECO:0000303" key="6">
    <source>
    </source>
</evidence>
<evidence type="ECO:0000305" key="7"/>
<evidence type="ECO:0000305" key="8">
    <source>
    </source>
</evidence>
<evidence type="ECO:0007744" key="9">
    <source>
    </source>
</evidence>
<evidence type="ECO:0007744" key="10">
    <source>
    </source>
</evidence>
<protein>
    <recommendedName>
        <fullName>MFS-type transporter SLC18B1</fullName>
    </recommendedName>
    <alternativeName>
        <fullName>Solute carrier family 18 member B1</fullName>
    </alternativeName>
    <alternativeName>
        <fullName evidence="6">Vesicular polyamine transporter</fullName>
        <shortName evidence="6">VPAT</shortName>
    </alternativeName>
</protein>
<comment type="function">
    <text evidence="1 5">Proton-coupled polyamine antiporter involved in the translocation of polyamines from cytosol into secretory vesicles prior to their release via exocytosis. Uses the electrochemical proton gradient generated by a V-type proton-pumping ATPase to couple the efflux of protons with the uptake of a polyamine molecule (PubMed:25355561). Facilitates vesicular storage of spermine and spermidine in astrocytes with an impact on glutamatergic neuronal transmission and memory formation (By similarity) (PubMed:25355561). Upon antigen stimulation, regulates polyamine accumulation and release in mast cell secretory granules, which in turn potentiates mast cell degranulation and histamine secretion (By similarity).</text>
</comment>
<comment type="catalytic activity">
    <reaction evidence="5">
        <text>spermine(in) + n H(+)(out) = spermine(out) + n H(+)(in)</text>
        <dbReference type="Rhea" id="RHEA:74263"/>
        <dbReference type="ChEBI" id="CHEBI:15378"/>
        <dbReference type="ChEBI" id="CHEBI:45725"/>
    </reaction>
    <physiologicalReaction direction="left-to-right" evidence="8">
        <dbReference type="Rhea" id="RHEA:74264"/>
    </physiologicalReaction>
</comment>
<comment type="catalytic activity">
    <reaction evidence="5">
        <text>spermidine(in) + n H(+)(out) = spermidine(out) + n H(+)(in)</text>
        <dbReference type="Rhea" id="RHEA:74267"/>
        <dbReference type="ChEBI" id="CHEBI:15378"/>
        <dbReference type="ChEBI" id="CHEBI:57834"/>
    </reaction>
    <physiologicalReaction direction="left-to-right" evidence="8">
        <dbReference type="Rhea" id="RHEA:74268"/>
    </physiologicalReaction>
</comment>
<comment type="catalytic activity">
    <reaction evidence="5">
        <text>serotonin(in) + n H(+)(out) = serotonin(out) + n H(+)(in)</text>
        <dbReference type="Rhea" id="RHEA:74295"/>
        <dbReference type="ChEBI" id="CHEBI:15378"/>
        <dbReference type="ChEBI" id="CHEBI:350546"/>
    </reaction>
    <physiologicalReaction direction="left-to-right" evidence="8">
        <dbReference type="Rhea" id="RHEA:74296"/>
    </physiologicalReaction>
</comment>
<comment type="biophysicochemical properties">
    <kinetics>
        <KM evidence="5">94 uM for spermine</KM>
        <KM evidence="5">4.2 uM for spermidine</KM>
        <Vmax evidence="5">8.6 nmol/min/mg enzyme toward spermine</Vmax>
        <Vmax evidence="5">170.0 nmol/min/mg enzyme toward spermidine</Vmax>
    </kinetics>
</comment>
<comment type="subcellular location">
    <subcellularLocation>
        <location evidence="1">Cytoplasmic vesicle</location>
        <location evidence="1">Secretory vesicle membrane</location>
        <topology evidence="3">Multi-pass membrane protein</topology>
    </subcellularLocation>
    <subcellularLocation>
        <location evidence="2">Cytoplasmic vesicle</location>
        <location evidence="2">Secretory vesicle</location>
        <location evidence="2">Synaptic vesicle membrane</location>
        <topology evidence="2">Multi-pass membrane protein</topology>
    </subcellularLocation>
    <text evidence="1 2">Colocalizes with VAMP3 and VAMP8 in mast cell secretory granules, which are distinct from histamine- and serotonin-containing granules (By similarity). Partly colocalizes with SYP in synaptic vesicles in hippocampal neurons. Colocalizes with SYP and VAMP2 in secretory vesicles of astrocytes (By similarity).</text>
</comment>
<comment type="tissue specificity">
    <text evidence="5">Expressed in various tissues including lung, placenta, adrenal gland, liver, testis, and brain.</text>
</comment>
<comment type="similarity">
    <text evidence="7">Belongs to the major facilitator superfamily.</text>
</comment>
<name>S18B1_HUMAN</name>
<gene>
    <name evidence="6" type="primary">SLC18B1</name>
    <name type="synonym">C6orf192</name>
</gene>
<dbReference type="EMBL" id="AK289918">
    <property type="protein sequence ID" value="BAF82607.1"/>
    <property type="molecule type" value="mRNA"/>
</dbReference>
<dbReference type="EMBL" id="AK124442">
    <property type="protein sequence ID" value="BAG54039.1"/>
    <property type="molecule type" value="mRNA"/>
</dbReference>
<dbReference type="EMBL" id="AL137783">
    <property type="status" value="NOT_ANNOTATED_CDS"/>
    <property type="molecule type" value="Genomic_DNA"/>
</dbReference>
<dbReference type="EMBL" id="AL032821">
    <property type="status" value="NOT_ANNOTATED_CDS"/>
    <property type="molecule type" value="Genomic_DNA"/>
</dbReference>
<dbReference type="EMBL" id="CH471051">
    <property type="protein sequence ID" value="EAW48013.1"/>
    <property type="molecule type" value="Genomic_DNA"/>
</dbReference>
<dbReference type="EMBL" id="BC069567">
    <property type="protein sequence ID" value="AAH69567.1"/>
    <property type="molecule type" value="mRNA"/>
</dbReference>
<dbReference type="EMBL" id="BC069570">
    <property type="protein sequence ID" value="AAH69570.1"/>
    <property type="molecule type" value="mRNA"/>
</dbReference>
<dbReference type="CCDS" id="CCDS5163.1"/>
<dbReference type="RefSeq" id="NP_439896.1">
    <property type="nucleotide sequence ID" value="NM_052831.3"/>
</dbReference>
<dbReference type="SMR" id="Q6NT16"/>
<dbReference type="BioGRID" id="125536">
    <property type="interactions" value="10"/>
</dbReference>
<dbReference type="FunCoup" id="Q6NT16">
    <property type="interactions" value="36"/>
</dbReference>
<dbReference type="IntAct" id="Q6NT16">
    <property type="interactions" value="7"/>
</dbReference>
<dbReference type="MINT" id="Q6NT16"/>
<dbReference type="STRING" id="9606.ENSP00000275227"/>
<dbReference type="TCDB" id="2.A.1.2.57">
    <property type="family name" value="the major facilitator superfamily (mfs)"/>
</dbReference>
<dbReference type="iPTMnet" id="Q6NT16"/>
<dbReference type="PhosphoSitePlus" id="Q6NT16"/>
<dbReference type="BioMuta" id="SLC18B1"/>
<dbReference type="DMDM" id="74748975"/>
<dbReference type="jPOST" id="Q6NT16"/>
<dbReference type="MassIVE" id="Q6NT16"/>
<dbReference type="PaxDb" id="9606-ENSP00000275227"/>
<dbReference type="PeptideAtlas" id="Q6NT16"/>
<dbReference type="ProteomicsDB" id="66652"/>
<dbReference type="Pumba" id="Q6NT16"/>
<dbReference type="Antibodypedia" id="32950">
    <property type="antibodies" value="70 antibodies from 15 providers"/>
</dbReference>
<dbReference type="DNASU" id="116843"/>
<dbReference type="Ensembl" id="ENST00000275227.9">
    <property type="protein sequence ID" value="ENSP00000275227.4"/>
    <property type="gene ID" value="ENSG00000146409.12"/>
</dbReference>
<dbReference type="GeneID" id="116843"/>
<dbReference type="KEGG" id="hsa:116843"/>
<dbReference type="MANE-Select" id="ENST00000275227.9">
    <property type="protein sequence ID" value="ENSP00000275227.4"/>
    <property type="RefSeq nucleotide sequence ID" value="NM_052831.3"/>
    <property type="RefSeq protein sequence ID" value="NP_439896.1"/>
</dbReference>
<dbReference type="UCSC" id="uc003qdw.2">
    <property type="organism name" value="human"/>
</dbReference>
<dbReference type="AGR" id="HGNC:21573"/>
<dbReference type="CTD" id="116843"/>
<dbReference type="DisGeNET" id="116843"/>
<dbReference type="GeneCards" id="SLC18B1"/>
<dbReference type="HGNC" id="HGNC:21573">
    <property type="gene designation" value="SLC18B1"/>
</dbReference>
<dbReference type="HPA" id="ENSG00000146409">
    <property type="expression patterns" value="Low tissue specificity"/>
</dbReference>
<dbReference type="MIM" id="613361">
    <property type="type" value="gene"/>
</dbReference>
<dbReference type="neXtProt" id="NX_Q6NT16"/>
<dbReference type="OpenTargets" id="ENSG00000146409"/>
<dbReference type="PharmGKB" id="PA134992727"/>
<dbReference type="VEuPathDB" id="HostDB:ENSG00000146409"/>
<dbReference type="eggNOG" id="KOG3764">
    <property type="taxonomic scope" value="Eukaryota"/>
</dbReference>
<dbReference type="GeneTree" id="ENSGT00940000156674"/>
<dbReference type="HOGENOM" id="CLU_028639_3_0_1"/>
<dbReference type="InParanoid" id="Q6NT16"/>
<dbReference type="OMA" id="RLNFEWA"/>
<dbReference type="OrthoDB" id="446368at2759"/>
<dbReference type="PAN-GO" id="Q6NT16">
    <property type="GO annotations" value="1 GO annotation based on evolutionary models"/>
</dbReference>
<dbReference type="PhylomeDB" id="Q6NT16"/>
<dbReference type="TreeFam" id="TF313494"/>
<dbReference type="PathwayCommons" id="Q6NT16"/>
<dbReference type="SignaLink" id="Q6NT16"/>
<dbReference type="BioGRID-ORCS" id="116843">
    <property type="hits" value="14 hits in 1157 CRISPR screens"/>
</dbReference>
<dbReference type="ChiTaRS" id="SLC18B1">
    <property type="organism name" value="human"/>
</dbReference>
<dbReference type="GenomeRNAi" id="116843"/>
<dbReference type="Pharos" id="Q6NT16">
    <property type="development level" value="Tdark"/>
</dbReference>
<dbReference type="PRO" id="PR:Q6NT16"/>
<dbReference type="Proteomes" id="UP000005640">
    <property type="component" value="Chromosome 6"/>
</dbReference>
<dbReference type="RNAct" id="Q6NT16">
    <property type="molecule type" value="protein"/>
</dbReference>
<dbReference type="Bgee" id="ENSG00000146409">
    <property type="expression patterns" value="Expressed in epithelial cell of pancreas and 180 other cell types or tissues"/>
</dbReference>
<dbReference type="ExpressionAtlas" id="Q6NT16">
    <property type="expression patterns" value="baseline and differential"/>
</dbReference>
<dbReference type="GO" id="GO:0030667">
    <property type="term" value="C:secretory granule membrane"/>
    <property type="evidence" value="ECO:0000250"/>
    <property type="project" value="UniProtKB"/>
</dbReference>
<dbReference type="GO" id="GO:0030672">
    <property type="term" value="C:synaptic vesicle membrane"/>
    <property type="evidence" value="ECO:0000250"/>
    <property type="project" value="UniProtKB"/>
</dbReference>
<dbReference type="GO" id="GO:0015311">
    <property type="term" value="F:monoamine:proton antiporter activity"/>
    <property type="evidence" value="ECO:0000314"/>
    <property type="project" value="UniProtKB"/>
</dbReference>
<dbReference type="GO" id="GO:0015312">
    <property type="term" value="F:polyamine:proton antiporter activity"/>
    <property type="evidence" value="ECO:0000314"/>
    <property type="project" value="UniProtKB"/>
</dbReference>
<dbReference type="GO" id="GO:0022857">
    <property type="term" value="F:transmembrane transporter activity"/>
    <property type="evidence" value="ECO:0000318"/>
    <property type="project" value="GO_Central"/>
</dbReference>
<dbReference type="GO" id="GO:0051610">
    <property type="term" value="P:serotonin uptake"/>
    <property type="evidence" value="ECO:0000314"/>
    <property type="project" value="UniProtKB"/>
</dbReference>
<dbReference type="GO" id="GO:0015848">
    <property type="term" value="P:spermidine transport"/>
    <property type="evidence" value="ECO:0000314"/>
    <property type="project" value="UniProtKB"/>
</dbReference>
<dbReference type="GO" id="GO:0000296">
    <property type="term" value="P:spermine transport"/>
    <property type="evidence" value="ECO:0000314"/>
    <property type="project" value="UniProtKB"/>
</dbReference>
<dbReference type="CDD" id="cd17385">
    <property type="entry name" value="MFS_SLC18B1"/>
    <property type="match status" value="1"/>
</dbReference>
<dbReference type="Gene3D" id="1.20.1250.20">
    <property type="entry name" value="MFS general substrate transporter like domains"/>
    <property type="match status" value="2"/>
</dbReference>
<dbReference type="InterPro" id="IPR011701">
    <property type="entry name" value="MFS"/>
</dbReference>
<dbReference type="InterPro" id="IPR020846">
    <property type="entry name" value="MFS_dom"/>
</dbReference>
<dbReference type="InterPro" id="IPR036259">
    <property type="entry name" value="MFS_trans_sf"/>
</dbReference>
<dbReference type="InterPro" id="IPR050930">
    <property type="entry name" value="MFS_Vesicular_Transporter"/>
</dbReference>
<dbReference type="PANTHER" id="PTHR23506">
    <property type="entry name" value="GH10249P"/>
    <property type="match status" value="1"/>
</dbReference>
<dbReference type="PANTHER" id="PTHR23506:SF26">
    <property type="entry name" value="MFS-TYPE TRANSPORTER SLC18B1"/>
    <property type="match status" value="1"/>
</dbReference>
<dbReference type="Pfam" id="PF07690">
    <property type="entry name" value="MFS_1"/>
    <property type="match status" value="1"/>
</dbReference>
<dbReference type="SUPFAM" id="SSF103473">
    <property type="entry name" value="MFS general substrate transporter"/>
    <property type="match status" value="1"/>
</dbReference>
<dbReference type="PROSITE" id="PS50850">
    <property type="entry name" value="MFS"/>
    <property type="match status" value="1"/>
</dbReference>
<reference key="1">
    <citation type="journal article" date="2004" name="Nat. Genet.">
        <title>Complete sequencing and characterization of 21,243 full-length human cDNAs.</title>
        <authorList>
            <person name="Ota T."/>
            <person name="Suzuki Y."/>
            <person name="Nishikawa T."/>
            <person name="Otsuki T."/>
            <person name="Sugiyama T."/>
            <person name="Irie R."/>
            <person name="Wakamatsu A."/>
            <person name="Hayashi K."/>
            <person name="Sato H."/>
            <person name="Nagai K."/>
            <person name="Kimura K."/>
            <person name="Makita H."/>
            <person name="Sekine M."/>
            <person name="Obayashi M."/>
            <person name="Nishi T."/>
            <person name="Shibahara T."/>
            <person name="Tanaka T."/>
            <person name="Ishii S."/>
            <person name="Yamamoto J."/>
            <person name="Saito K."/>
            <person name="Kawai Y."/>
            <person name="Isono Y."/>
            <person name="Nakamura Y."/>
            <person name="Nagahari K."/>
            <person name="Murakami K."/>
            <person name="Yasuda T."/>
            <person name="Iwayanagi T."/>
            <person name="Wagatsuma M."/>
            <person name="Shiratori A."/>
            <person name="Sudo H."/>
            <person name="Hosoiri T."/>
            <person name="Kaku Y."/>
            <person name="Kodaira H."/>
            <person name="Kondo H."/>
            <person name="Sugawara M."/>
            <person name="Takahashi M."/>
            <person name="Kanda K."/>
            <person name="Yokoi T."/>
            <person name="Furuya T."/>
            <person name="Kikkawa E."/>
            <person name="Omura Y."/>
            <person name="Abe K."/>
            <person name="Kamihara K."/>
            <person name="Katsuta N."/>
            <person name="Sato K."/>
            <person name="Tanikawa M."/>
            <person name="Yamazaki M."/>
            <person name="Ninomiya K."/>
            <person name="Ishibashi T."/>
            <person name="Yamashita H."/>
            <person name="Murakawa K."/>
            <person name="Fujimori K."/>
            <person name="Tanai H."/>
            <person name="Kimata M."/>
            <person name="Watanabe M."/>
            <person name="Hiraoka S."/>
            <person name="Chiba Y."/>
            <person name="Ishida S."/>
            <person name="Ono Y."/>
            <person name="Takiguchi S."/>
            <person name="Watanabe S."/>
            <person name="Yosida M."/>
            <person name="Hotuta T."/>
            <person name="Kusano J."/>
            <person name="Kanehori K."/>
            <person name="Takahashi-Fujii A."/>
            <person name="Hara H."/>
            <person name="Tanase T.-O."/>
            <person name="Nomura Y."/>
            <person name="Togiya S."/>
            <person name="Komai F."/>
            <person name="Hara R."/>
            <person name="Takeuchi K."/>
            <person name="Arita M."/>
            <person name="Imose N."/>
            <person name="Musashino K."/>
            <person name="Yuuki H."/>
            <person name="Oshima A."/>
            <person name="Sasaki N."/>
            <person name="Aotsuka S."/>
            <person name="Yoshikawa Y."/>
            <person name="Matsunawa H."/>
            <person name="Ichihara T."/>
            <person name="Shiohata N."/>
            <person name="Sano S."/>
            <person name="Moriya S."/>
            <person name="Momiyama H."/>
            <person name="Satoh N."/>
            <person name="Takami S."/>
            <person name="Terashima Y."/>
            <person name="Suzuki O."/>
            <person name="Nakagawa S."/>
            <person name="Senoh A."/>
            <person name="Mizoguchi H."/>
            <person name="Goto Y."/>
            <person name="Shimizu F."/>
            <person name="Wakebe H."/>
            <person name="Hishigaki H."/>
            <person name="Watanabe T."/>
            <person name="Sugiyama A."/>
            <person name="Takemoto M."/>
            <person name="Kawakami B."/>
            <person name="Yamazaki M."/>
            <person name="Watanabe K."/>
            <person name="Kumagai A."/>
            <person name="Itakura S."/>
            <person name="Fukuzumi Y."/>
            <person name="Fujimori Y."/>
            <person name="Komiyama M."/>
            <person name="Tashiro H."/>
            <person name="Tanigami A."/>
            <person name="Fujiwara T."/>
            <person name="Ono T."/>
            <person name="Yamada K."/>
            <person name="Fujii Y."/>
            <person name="Ozaki K."/>
            <person name="Hirao M."/>
            <person name="Ohmori Y."/>
            <person name="Kawabata A."/>
            <person name="Hikiji T."/>
            <person name="Kobatake N."/>
            <person name="Inagaki H."/>
            <person name="Ikema Y."/>
            <person name="Okamoto S."/>
            <person name="Okitani R."/>
            <person name="Kawakami T."/>
            <person name="Noguchi S."/>
            <person name="Itoh T."/>
            <person name="Shigeta K."/>
            <person name="Senba T."/>
            <person name="Matsumura K."/>
            <person name="Nakajima Y."/>
            <person name="Mizuno T."/>
            <person name="Morinaga M."/>
            <person name="Sasaki M."/>
            <person name="Togashi T."/>
            <person name="Oyama M."/>
            <person name="Hata H."/>
            <person name="Watanabe M."/>
            <person name="Komatsu T."/>
            <person name="Mizushima-Sugano J."/>
            <person name="Satoh T."/>
            <person name="Shirai Y."/>
            <person name="Takahashi Y."/>
            <person name="Nakagawa K."/>
            <person name="Okumura K."/>
            <person name="Nagase T."/>
            <person name="Nomura N."/>
            <person name="Kikuchi H."/>
            <person name="Masuho Y."/>
            <person name="Yamashita R."/>
            <person name="Nakai K."/>
            <person name="Yada T."/>
            <person name="Nakamura Y."/>
            <person name="Ohara O."/>
            <person name="Isogai T."/>
            <person name="Sugano S."/>
        </authorList>
    </citation>
    <scope>NUCLEOTIDE SEQUENCE [LARGE SCALE MRNA]</scope>
    <source>
        <tissue>Cerebellum</tissue>
        <tissue>Corpus callosum</tissue>
    </source>
</reference>
<reference key="2">
    <citation type="journal article" date="2003" name="Nature">
        <title>The DNA sequence and analysis of human chromosome 6.</title>
        <authorList>
            <person name="Mungall A.J."/>
            <person name="Palmer S.A."/>
            <person name="Sims S.K."/>
            <person name="Edwards C.A."/>
            <person name="Ashurst J.L."/>
            <person name="Wilming L."/>
            <person name="Jones M.C."/>
            <person name="Horton R."/>
            <person name="Hunt S.E."/>
            <person name="Scott C.E."/>
            <person name="Gilbert J.G.R."/>
            <person name="Clamp M.E."/>
            <person name="Bethel G."/>
            <person name="Milne S."/>
            <person name="Ainscough R."/>
            <person name="Almeida J.P."/>
            <person name="Ambrose K.D."/>
            <person name="Andrews T.D."/>
            <person name="Ashwell R.I.S."/>
            <person name="Babbage A.K."/>
            <person name="Bagguley C.L."/>
            <person name="Bailey J."/>
            <person name="Banerjee R."/>
            <person name="Barker D.J."/>
            <person name="Barlow K.F."/>
            <person name="Bates K."/>
            <person name="Beare D.M."/>
            <person name="Beasley H."/>
            <person name="Beasley O."/>
            <person name="Bird C.P."/>
            <person name="Blakey S.E."/>
            <person name="Bray-Allen S."/>
            <person name="Brook J."/>
            <person name="Brown A.J."/>
            <person name="Brown J.Y."/>
            <person name="Burford D.C."/>
            <person name="Burrill W."/>
            <person name="Burton J."/>
            <person name="Carder C."/>
            <person name="Carter N.P."/>
            <person name="Chapman J.C."/>
            <person name="Clark S.Y."/>
            <person name="Clark G."/>
            <person name="Clee C.M."/>
            <person name="Clegg S."/>
            <person name="Cobley V."/>
            <person name="Collier R.E."/>
            <person name="Collins J.E."/>
            <person name="Colman L.K."/>
            <person name="Corby N.R."/>
            <person name="Coville G.J."/>
            <person name="Culley K.M."/>
            <person name="Dhami P."/>
            <person name="Davies J."/>
            <person name="Dunn M."/>
            <person name="Earthrowl M.E."/>
            <person name="Ellington A.E."/>
            <person name="Evans K.A."/>
            <person name="Faulkner L."/>
            <person name="Francis M.D."/>
            <person name="Frankish A."/>
            <person name="Frankland J."/>
            <person name="French L."/>
            <person name="Garner P."/>
            <person name="Garnett J."/>
            <person name="Ghori M.J."/>
            <person name="Gilby L.M."/>
            <person name="Gillson C.J."/>
            <person name="Glithero R.J."/>
            <person name="Grafham D.V."/>
            <person name="Grant M."/>
            <person name="Gribble S."/>
            <person name="Griffiths C."/>
            <person name="Griffiths M.N.D."/>
            <person name="Hall R."/>
            <person name="Halls K.S."/>
            <person name="Hammond S."/>
            <person name="Harley J.L."/>
            <person name="Hart E.A."/>
            <person name="Heath P.D."/>
            <person name="Heathcott R."/>
            <person name="Holmes S.J."/>
            <person name="Howden P.J."/>
            <person name="Howe K.L."/>
            <person name="Howell G.R."/>
            <person name="Huckle E."/>
            <person name="Humphray S.J."/>
            <person name="Humphries M.D."/>
            <person name="Hunt A.R."/>
            <person name="Johnson C.M."/>
            <person name="Joy A.A."/>
            <person name="Kay M."/>
            <person name="Keenan S.J."/>
            <person name="Kimberley A.M."/>
            <person name="King A."/>
            <person name="Laird G.K."/>
            <person name="Langford C."/>
            <person name="Lawlor S."/>
            <person name="Leongamornlert D.A."/>
            <person name="Leversha M."/>
            <person name="Lloyd C.R."/>
            <person name="Lloyd D.M."/>
            <person name="Loveland J.E."/>
            <person name="Lovell J."/>
            <person name="Martin S."/>
            <person name="Mashreghi-Mohammadi M."/>
            <person name="Maslen G.L."/>
            <person name="Matthews L."/>
            <person name="McCann O.T."/>
            <person name="McLaren S.J."/>
            <person name="McLay K."/>
            <person name="McMurray A."/>
            <person name="Moore M.J.F."/>
            <person name="Mullikin J.C."/>
            <person name="Niblett D."/>
            <person name="Nickerson T."/>
            <person name="Novik K.L."/>
            <person name="Oliver K."/>
            <person name="Overton-Larty E.K."/>
            <person name="Parker A."/>
            <person name="Patel R."/>
            <person name="Pearce A.V."/>
            <person name="Peck A.I."/>
            <person name="Phillimore B.J.C.T."/>
            <person name="Phillips S."/>
            <person name="Plumb R.W."/>
            <person name="Porter K.M."/>
            <person name="Ramsey Y."/>
            <person name="Ranby S.A."/>
            <person name="Rice C.M."/>
            <person name="Ross M.T."/>
            <person name="Searle S.M."/>
            <person name="Sehra H.K."/>
            <person name="Sheridan E."/>
            <person name="Skuce C.D."/>
            <person name="Smith S."/>
            <person name="Smith M."/>
            <person name="Spraggon L."/>
            <person name="Squares S.L."/>
            <person name="Steward C.A."/>
            <person name="Sycamore N."/>
            <person name="Tamlyn-Hall G."/>
            <person name="Tester J."/>
            <person name="Theaker A.J."/>
            <person name="Thomas D.W."/>
            <person name="Thorpe A."/>
            <person name="Tracey A."/>
            <person name="Tromans A."/>
            <person name="Tubby B."/>
            <person name="Wall M."/>
            <person name="Wallis J.M."/>
            <person name="West A.P."/>
            <person name="White S.S."/>
            <person name="Whitehead S.L."/>
            <person name="Whittaker H."/>
            <person name="Wild A."/>
            <person name="Willey D.J."/>
            <person name="Wilmer T.E."/>
            <person name="Wood J.M."/>
            <person name="Wray P.W."/>
            <person name="Wyatt J.C."/>
            <person name="Young L."/>
            <person name="Younger R.M."/>
            <person name="Bentley D.R."/>
            <person name="Coulson A."/>
            <person name="Durbin R.M."/>
            <person name="Hubbard T."/>
            <person name="Sulston J.E."/>
            <person name="Dunham I."/>
            <person name="Rogers J."/>
            <person name="Beck S."/>
        </authorList>
    </citation>
    <scope>NUCLEOTIDE SEQUENCE [LARGE SCALE GENOMIC DNA]</scope>
</reference>
<reference key="3">
    <citation type="submission" date="2005-09" db="EMBL/GenBank/DDBJ databases">
        <authorList>
            <person name="Mural R.J."/>
            <person name="Istrail S."/>
            <person name="Sutton G.G."/>
            <person name="Florea L."/>
            <person name="Halpern A.L."/>
            <person name="Mobarry C.M."/>
            <person name="Lippert R."/>
            <person name="Walenz B."/>
            <person name="Shatkay H."/>
            <person name="Dew I."/>
            <person name="Miller J.R."/>
            <person name="Flanigan M.J."/>
            <person name="Edwards N.J."/>
            <person name="Bolanos R."/>
            <person name="Fasulo D."/>
            <person name="Halldorsson B.V."/>
            <person name="Hannenhalli S."/>
            <person name="Turner R."/>
            <person name="Yooseph S."/>
            <person name="Lu F."/>
            <person name="Nusskern D.R."/>
            <person name="Shue B.C."/>
            <person name="Zheng X.H."/>
            <person name="Zhong F."/>
            <person name="Delcher A.L."/>
            <person name="Huson D.H."/>
            <person name="Kravitz S.A."/>
            <person name="Mouchard L."/>
            <person name="Reinert K."/>
            <person name="Remington K.A."/>
            <person name="Clark A.G."/>
            <person name="Waterman M.S."/>
            <person name="Eichler E.E."/>
            <person name="Adams M.D."/>
            <person name="Hunkapiller M.W."/>
            <person name="Myers E.W."/>
            <person name="Venter J.C."/>
        </authorList>
    </citation>
    <scope>NUCLEOTIDE SEQUENCE [LARGE SCALE GENOMIC DNA]</scope>
</reference>
<reference key="4">
    <citation type="journal article" date="2004" name="Genome Res.">
        <title>The status, quality, and expansion of the NIH full-length cDNA project: the Mammalian Gene Collection (MGC).</title>
        <authorList>
            <consortium name="The MGC Project Team"/>
        </authorList>
    </citation>
    <scope>NUCLEOTIDE SEQUENCE [LARGE SCALE MRNA]</scope>
</reference>
<reference key="5">
    <citation type="journal article" date="2012" name="Proc. Natl. Acad. Sci. U.S.A.">
        <title>N-terminal acetylome analyses and functional insights of the N-terminal acetyltransferase NatB.</title>
        <authorList>
            <person name="Van Damme P."/>
            <person name="Lasa M."/>
            <person name="Polevoda B."/>
            <person name="Gazquez C."/>
            <person name="Elosegui-Artola A."/>
            <person name="Kim D.S."/>
            <person name="De Juan-Pardo E."/>
            <person name="Demeyer K."/>
            <person name="Hole K."/>
            <person name="Larrea E."/>
            <person name="Timmerman E."/>
            <person name="Prieto J."/>
            <person name="Arnesen T."/>
            <person name="Sherman F."/>
            <person name="Gevaert K."/>
            <person name="Aldabe R."/>
        </authorList>
    </citation>
    <scope>ACETYLATION [LARGE SCALE ANALYSIS] AT MET-1</scope>
    <scope>IDENTIFICATION BY MASS SPECTROMETRY [LARGE SCALE ANALYSIS]</scope>
</reference>
<reference key="6">
    <citation type="journal article" date="2013" name="J. Proteome Res.">
        <title>Toward a comprehensive characterization of a human cancer cell phosphoproteome.</title>
        <authorList>
            <person name="Zhou H."/>
            <person name="Di Palma S."/>
            <person name="Preisinger C."/>
            <person name="Peng M."/>
            <person name="Polat A.N."/>
            <person name="Heck A.J."/>
            <person name="Mohammed S."/>
        </authorList>
    </citation>
    <scope>PHOSPHORYLATION [LARGE SCALE ANALYSIS] AT SER-21 AND SER-438</scope>
    <scope>IDENTIFICATION BY MASS SPECTROMETRY [LARGE SCALE ANALYSIS]</scope>
    <source>
        <tissue>Cervix carcinoma</tissue>
        <tissue>Erythroleukemia</tissue>
    </source>
</reference>
<reference key="7">
    <citation type="journal article" date="2014" name="Sci. Rep.">
        <title>Identification of a mammalian vesicular polyamine transporter.</title>
        <authorList>
            <person name="Hiasa M."/>
            <person name="Miyaji T."/>
            <person name="Haruna Y."/>
            <person name="Takeuchi T."/>
            <person name="Harada Y."/>
            <person name="Moriyama S."/>
            <person name="Yamamoto A."/>
            <person name="Omote H."/>
            <person name="Moriyama Y."/>
        </authorList>
    </citation>
    <scope>FUNCTION</scope>
    <scope>TRANSPORT ACTIVITY</scope>
    <scope>BIOPHYSICOCHEMICAL PROPERTIES</scope>
    <scope>TISSUE SPECIFICITY</scope>
</reference>